<accession>Q10030</accession>
<gene>
    <name type="ORF">C27D6.1</name>
</gene>
<protein>
    <recommendedName>
        <fullName>Uncharacterized protein C27D6.1</fullName>
    </recommendedName>
</protein>
<name>YQ91_CAEEL</name>
<evidence type="ECO:0000255" key="1"/>
<evidence type="ECO:0000256" key="2">
    <source>
        <dbReference type="SAM" id="MobiDB-lite"/>
    </source>
</evidence>
<keyword id="KW-0175">Coiled coil</keyword>
<keyword id="KW-1185">Reference proteome</keyword>
<reference key="1">
    <citation type="journal article" date="1998" name="Science">
        <title>Genome sequence of the nematode C. elegans: a platform for investigating biology.</title>
        <authorList>
            <consortium name="The C. elegans sequencing consortium"/>
        </authorList>
    </citation>
    <scope>NUCLEOTIDE SEQUENCE [LARGE SCALE GENOMIC DNA]</scope>
    <source>
        <strain>Bristol N2</strain>
    </source>
</reference>
<organism>
    <name type="scientific">Caenorhabditis elegans</name>
    <dbReference type="NCBI Taxonomy" id="6239"/>
    <lineage>
        <taxon>Eukaryota</taxon>
        <taxon>Metazoa</taxon>
        <taxon>Ecdysozoa</taxon>
        <taxon>Nematoda</taxon>
        <taxon>Chromadorea</taxon>
        <taxon>Rhabditida</taxon>
        <taxon>Rhabditina</taxon>
        <taxon>Rhabditomorpha</taxon>
        <taxon>Rhabditoidea</taxon>
        <taxon>Rhabditidae</taxon>
        <taxon>Peloderinae</taxon>
        <taxon>Caenorhabditis</taxon>
    </lineage>
</organism>
<proteinExistence type="predicted"/>
<feature type="chain" id="PRO_0000065192" description="Uncharacterized protein C27D6.1">
    <location>
        <begin position="1"/>
        <end position="782"/>
    </location>
</feature>
<feature type="region of interest" description="Disordered" evidence="2">
    <location>
        <begin position="1"/>
        <end position="25"/>
    </location>
</feature>
<feature type="region of interest" description="Disordered" evidence="2">
    <location>
        <begin position="175"/>
        <end position="195"/>
    </location>
</feature>
<feature type="region of interest" description="Disordered" evidence="2">
    <location>
        <begin position="748"/>
        <end position="782"/>
    </location>
</feature>
<feature type="coiled-coil region" evidence="1">
    <location>
        <begin position="223"/>
        <end position="331"/>
    </location>
</feature>
<feature type="coiled-coil region" evidence="1">
    <location>
        <begin position="348"/>
        <end position="398"/>
    </location>
</feature>
<feature type="coiled-coil region" evidence="1">
    <location>
        <begin position="428"/>
        <end position="601"/>
    </location>
</feature>
<feature type="coiled-coil region" evidence="1">
    <location>
        <begin position="699"/>
        <end position="743"/>
    </location>
</feature>
<feature type="compositionally biased region" description="Low complexity" evidence="2">
    <location>
        <begin position="13"/>
        <end position="25"/>
    </location>
</feature>
<feature type="compositionally biased region" description="Basic and acidic residues" evidence="2">
    <location>
        <begin position="183"/>
        <end position="195"/>
    </location>
</feature>
<feature type="compositionally biased region" description="Polar residues" evidence="2">
    <location>
        <begin position="769"/>
        <end position="782"/>
    </location>
</feature>
<sequence length="782" mass="90059">MFSPSKFRKQVNESESVSNCESTTSNSRRILDQHAGLPISSAFRTEASDIGHHFSTKMYFKILSPNNVFALMGDNEFKTSFKIFTIFEPTSTPNGKIQSLITISYKINNVLFKMEKEIFIEKVNIFSLELHIFNFQSTNRSNPASESIHQLDLSSEALVTSTLNIRGNKITTTLRPRTSPYKRAGDASMSREDLRSPDSVSTFTTVLHVFHKVFQVAATYTIRENRSERQTKVKLESLERRLKANEKARKEIEAEAEKWKDRATRNSKRLPELELELAETVQAKEEWQVKSQEMEIQNKQLVEELNEVQKKLEEIENSQKTFHQKVVSTLNLDEEYFQNPDEEQDGSLSQFNMDVLEQEIVKYQEKCISLKQENEILKEKLQQLSSSLTVNQNHVSTLMDHLEINKEQSREIQGICKKEIAIRQDHENRINHDVTLLNSLINEQKMELEMLKAEIRCLRSYSQEMSQSNKNNIILLKSAETERKSLLETLTVLLNSEEEATENNVKRTIRDLVRERDTEQTKRFEAEKAASNAEGVLLEQAKQQRNALFRARVSEEEYSKSMEKIEELEQELLASDLERKNLEHKIASLENCISKVSQLLNVNVGGVFDAIFDRIEELIAQESVYRVVVNENRLISENIFRGLQSVRKDFQSGKSGGGSDKKQPASPVAAAAKIIQERHTLKTIDKMDKLNKDLLATMTIETLKAADIEKTNLKKRMNEQDARIRQLEREKKEGERIRSIIAKWEKRNIPKTEKSSPMKKVPPIENFRAKSQTSITGLSPVL</sequence>
<dbReference type="EMBL" id="FO080688">
    <property type="protein sequence ID" value="CCD65809.1"/>
    <property type="molecule type" value="Genomic_DNA"/>
</dbReference>
<dbReference type="PIR" id="T15654">
    <property type="entry name" value="T15654"/>
</dbReference>
<dbReference type="RefSeq" id="NP_494966.1">
    <property type="nucleotide sequence ID" value="NM_062565.3"/>
</dbReference>
<dbReference type="SMR" id="Q10030"/>
<dbReference type="BioGRID" id="47802">
    <property type="interactions" value="1"/>
</dbReference>
<dbReference type="STRING" id="6239.C27D6.1.1"/>
<dbReference type="PaxDb" id="6239-C27D6.1"/>
<dbReference type="EnsemblMetazoa" id="C27D6.1.1">
    <property type="protein sequence ID" value="C27D6.1.1"/>
    <property type="gene ID" value="WBGene00016160"/>
</dbReference>
<dbReference type="UCSC" id="C27D6.1">
    <property type="organism name" value="c. elegans"/>
</dbReference>
<dbReference type="AGR" id="WB:WBGene00016160"/>
<dbReference type="WormBase" id="C27D6.1">
    <property type="protein sequence ID" value="CE52759"/>
    <property type="gene ID" value="WBGene00016160"/>
</dbReference>
<dbReference type="eggNOG" id="ENOG502TGJN">
    <property type="taxonomic scope" value="Eukaryota"/>
</dbReference>
<dbReference type="GeneTree" id="ENSGT00390000012924"/>
<dbReference type="HOGENOM" id="CLU_016555_0_0_1"/>
<dbReference type="InParanoid" id="Q10030"/>
<dbReference type="OMA" id="KWKDRAT"/>
<dbReference type="PhylomeDB" id="Q10030"/>
<dbReference type="PRO" id="PR:Q10030"/>
<dbReference type="Proteomes" id="UP000001940">
    <property type="component" value="Chromosome II"/>
</dbReference>
<dbReference type="InterPro" id="IPR039139">
    <property type="entry name" value="CCDC170-like"/>
</dbReference>
<dbReference type="PANTHER" id="PTHR18863:SF6">
    <property type="entry name" value="COILED-COIL DOMAIN-CONTAINING PROTEIN 170"/>
    <property type="match status" value="1"/>
</dbReference>
<dbReference type="PANTHER" id="PTHR18863">
    <property type="entry name" value="TSEC-2-RELATED"/>
    <property type="match status" value="1"/>
</dbReference>